<proteinExistence type="evidence at protein level"/>
<organism>
    <name type="scientific">Anaerotignum propionicum</name>
    <name type="common">Clostridium propionicum</name>
    <dbReference type="NCBI Taxonomy" id="28446"/>
    <lineage>
        <taxon>Bacteria</taxon>
        <taxon>Bacillati</taxon>
        <taxon>Bacillota</taxon>
        <taxon>Clostridia</taxon>
        <taxon>Lachnospirales</taxon>
        <taxon>Anaerotignaceae</taxon>
        <taxon>Anaerotignum</taxon>
    </lineage>
</organism>
<gene>
    <name type="primary">acrB</name>
</gene>
<accession>G3KIM7</accession>
<protein>
    <recommendedName>
        <fullName>Acryloyl-CoA reductase electron transfer subunit gamma</fullName>
    </recommendedName>
    <alternativeName>
        <fullName>Electron transfer flavoprotein small subunit</fullName>
        <shortName>ETFSS</shortName>
    </alternativeName>
    <alternativeName>
        <fullName>Electron transfer flavoprotein subunit gamma</fullName>
        <shortName>Gamma-ETF</shortName>
    </alternativeName>
</protein>
<name>ETFB_ANAPI</name>
<keyword id="KW-0963">Cytoplasm</keyword>
<keyword id="KW-0249">Electron transport</keyword>
<keyword id="KW-0813">Transport</keyword>
<sequence>MRIYVCVKQVPDTSGKVAVNPDGTLNRASMAAIINPDDMSAIEQALKLKDETGCQVTALTMGPPPAEGMLREIIAMGADDGVLISAREFGGSDTFATSQIISAAIHKLGLSNEDMIFCGRQAIDGDTAQVGPQIAEKLSIPQVTYGAGIKKSGDLVLVKRMLEDGYMMIEVETPCLITCIQDKAVKPRYMTLNGIMECYSKPLLVLDYEALKDEPLIELDTIGLKGSPTNIFKSFTPPQKGVGVMLQGTDKEKVEDLVDKLMQKHVI</sequence>
<reference key="1">
    <citation type="submission" date="2011-07" db="EMBL/GenBank/DDBJ databases">
        <authorList>
            <person name="Poehlein A."/>
            <person name="Schlien K."/>
            <person name="Daniel R."/>
            <person name="Gottschalk G."/>
            <person name="Buckel W."/>
        </authorList>
    </citation>
    <scope>NUCLEOTIDE SEQUENCE [GENOMIC DNA]</scope>
    <source>
        <strain>ATCC 25522 / DSM 1682 / JCM 1430 / NCIMB 10656 / VPI 5303 / X2</strain>
    </source>
</reference>
<reference key="2">
    <citation type="journal article" date="2013" name="Appl. Microbiol. Biotechnol.">
        <title>Engineering Escherichia coli with acrylate pathway genes for propionic acid synthesis and its impact on mixed-acid fermentation.</title>
        <authorList>
            <person name="Kandasamy V."/>
            <person name="Vaidyanathan H."/>
            <person name="Djurdjevic I."/>
            <person name="Jayamani E."/>
            <person name="Ramachandran K.B."/>
            <person name="Buckel W."/>
            <person name="Jayaraman G."/>
            <person name="Ramalingam S."/>
        </authorList>
    </citation>
    <scope>NUCLEOTIDE SEQUENCE [GENOMIC DNA]</scope>
    <source>
        <strain>ATCC 25522 / DSM 1682 / JCM 1430 / NCIMB 10656 / VPI 5303 / X2</strain>
    </source>
</reference>
<reference key="3">
    <citation type="journal article" date="2003" name="Eur. J. Biochem.">
        <title>Acryloyl-CoA reductase from Clostridium propionicum. An enzyme complex of propionyl-CoA dehydrogenase and electron-transferring flavoprotein.</title>
        <authorList>
            <person name="Hetzel M."/>
            <person name="Brock M."/>
            <person name="Selmer T."/>
            <person name="Pierik A.J."/>
            <person name="Golding B.T."/>
            <person name="Buckel W."/>
        </authorList>
    </citation>
    <scope>FUNCTION</scope>
    <scope>SUBCELLULAR LOCATION</scope>
    <scope>MASS SPECTROMETRY</scope>
    <scope>SUBUNIT</scope>
    <source>
        <strain>ATCC 25522 / DSM 1682 / JCM 1430 / NCIMB 10656 / VPI 5303 / X2</strain>
    </source>
</reference>
<comment type="function">
    <text evidence="1">Part of the ETF-acryloyl-CoA reductase complex involved in the pathway of L-alanine fermentation. The electron transfer flavoprotein (ETF) serves as a specific electron acceptor for acryloyl-CoA reductase.</text>
</comment>
<comment type="subunit">
    <text evidence="1">Heterohexadecamer; tetramer of tetramers. Each tetramer is composed of 2 alpha (AcrC), a beta (AcrA) and a gamma (AcrB) subunit.</text>
</comment>
<comment type="subcellular location">
    <subcellularLocation>
        <location evidence="1">Cytoplasm</location>
    </subcellularLocation>
</comment>
<comment type="mass spectrometry"/>
<comment type="similarity">
    <text evidence="2">Belongs to the ETF beta-subunit/FixA family.</text>
</comment>
<evidence type="ECO:0000269" key="1">
    <source>
    </source>
</evidence>
<evidence type="ECO:0000305" key="2"/>
<feature type="chain" id="PRO_0000424269" description="Acryloyl-CoA reductase electron transfer subunit gamma">
    <location>
        <begin position="1"/>
        <end position="267"/>
    </location>
</feature>
<dbReference type="EMBL" id="JN244655">
    <property type="protein sequence ID" value="AEM62997.1"/>
    <property type="molecule type" value="Genomic_DNA"/>
</dbReference>
<dbReference type="RefSeq" id="WP_066051468.1">
    <property type="nucleotide sequence ID" value="NZ_DALYXG010000006.1"/>
</dbReference>
<dbReference type="SMR" id="G3KIM7"/>
<dbReference type="BioCyc" id="MetaCyc:MONOMER-12759"/>
<dbReference type="SABIO-RK" id="G3KIM7"/>
<dbReference type="GO" id="GO:0005737">
    <property type="term" value="C:cytoplasm"/>
    <property type="evidence" value="ECO:0007669"/>
    <property type="project" value="UniProtKB-SubCell"/>
</dbReference>
<dbReference type="GO" id="GO:0009055">
    <property type="term" value="F:electron transfer activity"/>
    <property type="evidence" value="ECO:0007669"/>
    <property type="project" value="InterPro"/>
</dbReference>
<dbReference type="CDD" id="cd01714">
    <property type="entry name" value="ETF_beta"/>
    <property type="match status" value="1"/>
</dbReference>
<dbReference type="Gene3D" id="3.40.50.620">
    <property type="entry name" value="HUPs"/>
    <property type="match status" value="1"/>
</dbReference>
<dbReference type="InterPro" id="IPR050044">
    <property type="entry name" value="AcrB"/>
</dbReference>
<dbReference type="InterPro" id="IPR014730">
    <property type="entry name" value="ETF_a/b_N"/>
</dbReference>
<dbReference type="InterPro" id="IPR012255">
    <property type="entry name" value="ETF_b"/>
</dbReference>
<dbReference type="InterPro" id="IPR033948">
    <property type="entry name" value="ETF_beta_N"/>
</dbReference>
<dbReference type="InterPro" id="IPR014729">
    <property type="entry name" value="Rossmann-like_a/b/a_fold"/>
</dbReference>
<dbReference type="NCBIfam" id="NF042971">
    <property type="entry name" value="AcrlCoAredClosAcrB"/>
    <property type="match status" value="1"/>
</dbReference>
<dbReference type="PANTHER" id="PTHR21294">
    <property type="entry name" value="ELECTRON TRANSFER FLAVOPROTEIN BETA-SUBUNIT"/>
    <property type="match status" value="1"/>
</dbReference>
<dbReference type="PANTHER" id="PTHR21294:SF17">
    <property type="entry name" value="PROTEIN FIXA"/>
    <property type="match status" value="1"/>
</dbReference>
<dbReference type="Pfam" id="PF01012">
    <property type="entry name" value="ETF"/>
    <property type="match status" value="1"/>
</dbReference>
<dbReference type="PIRSF" id="PIRSF000090">
    <property type="entry name" value="Beta-ETF"/>
    <property type="match status" value="1"/>
</dbReference>
<dbReference type="SMART" id="SM00893">
    <property type="entry name" value="ETF"/>
    <property type="match status" value="1"/>
</dbReference>
<dbReference type="SUPFAM" id="SSF52402">
    <property type="entry name" value="Adenine nucleotide alpha hydrolases-like"/>
    <property type="match status" value="1"/>
</dbReference>